<sequence>MEDVQNSPAKVAMSIDRVGVRDLTLPLVVRDRESGSQSTMAKVALSVDLPAHFKGTHMSRFVEALEDWSEELDYQSFYNLLSDILRRLEAERAHAELSFPYCLQKKSPVSGRKGIMSYECTVEGEMVGDNLEFTLGVKVPVMTVCPCSKAISDEGAHSQRAVVHIRTKSKGFVWIEDLVEIAEASGSCEVFSLLKREDEKHVTEKSFSNPTFVEDVVRNAAMGLEKHSKILWYQVDVESFESIHNHCAFASIAKPK</sequence>
<protein>
    <recommendedName>
        <fullName evidence="1">GTP cyclohydrolase FolE2</fullName>
        <ecNumber evidence="1">3.5.4.16</ecNumber>
    </recommendedName>
</protein>
<reference key="1">
    <citation type="submission" date="2009-06" db="EMBL/GenBank/DDBJ databases">
        <title>Complete sequence of Desulfovibrio salexigens DSM 2638.</title>
        <authorList>
            <consortium name="US DOE Joint Genome Institute"/>
            <person name="Lucas S."/>
            <person name="Copeland A."/>
            <person name="Lapidus A."/>
            <person name="Glavina del Rio T."/>
            <person name="Tice H."/>
            <person name="Bruce D."/>
            <person name="Goodwin L."/>
            <person name="Pitluck S."/>
            <person name="Munk A.C."/>
            <person name="Brettin T."/>
            <person name="Detter J.C."/>
            <person name="Han C."/>
            <person name="Tapia R."/>
            <person name="Larimer F."/>
            <person name="Land M."/>
            <person name="Hauser L."/>
            <person name="Kyrpides N."/>
            <person name="Anderson I."/>
            <person name="Wall J.D."/>
            <person name="Arkin A.P."/>
            <person name="Dehal P."/>
            <person name="Chivian D."/>
            <person name="Giles B."/>
            <person name="Hazen T.C."/>
        </authorList>
    </citation>
    <scope>NUCLEOTIDE SEQUENCE [LARGE SCALE GENOMIC DNA]</scope>
    <source>
        <strain>ATCC 14822 / DSM 2638 / NCIMB 8403 / VKM B-1763</strain>
    </source>
</reference>
<evidence type="ECO:0000255" key="1">
    <source>
        <dbReference type="HAMAP-Rule" id="MF_01527"/>
    </source>
</evidence>
<keyword id="KW-0378">Hydrolase</keyword>
<keyword id="KW-1185">Reference proteome</keyword>
<accession>C6C0U6</accession>
<proteinExistence type="inferred from homology"/>
<dbReference type="EC" id="3.5.4.16" evidence="1"/>
<dbReference type="EMBL" id="CP001649">
    <property type="protein sequence ID" value="ACS81043.1"/>
    <property type="molecule type" value="Genomic_DNA"/>
</dbReference>
<dbReference type="RefSeq" id="WP_015852859.1">
    <property type="nucleotide sequence ID" value="NC_012881.1"/>
</dbReference>
<dbReference type="SMR" id="C6C0U6"/>
<dbReference type="STRING" id="526222.Desal_2991"/>
<dbReference type="KEGG" id="dsa:Desal_2991"/>
<dbReference type="eggNOG" id="COG1469">
    <property type="taxonomic scope" value="Bacteria"/>
</dbReference>
<dbReference type="HOGENOM" id="CLU_062816_1_1_7"/>
<dbReference type="OrthoDB" id="9774824at2"/>
<dbReference type="UniPathway" id="UPA00848">
    <property type="reaction ID" value="UER00151"/>
</dbReference>
<dbReference type="Proteomes" id="UP000002601">
    <property type="component" value="Chromosome"/>
</dbReference>
<dbReference type="GO" id="GO:0003934">
    <property type="term" value="F:GTP cyclohydrolase I activity"/>
    <property type="evidence" value="ECO:0007669"/>
    <property type="project" value="UniProtKB-UniRule"/>
</dbReference>
<dbReference type="GO" id="GO:0046654">
    <property type="term" value="P:tetrahydrofolate biosynthetic process"/>
    <property type="evidence" value="ECO:0007669"/>
    <property type="project" value="UniProtKB-UniRule"/>
</dbReference>
<dbReference type="Gene3D" id="3.10.270.10">
    <property type="entry name" value="Urate Oxidase"/>
    <property type="match status" value="1"/>
</dbReference>
<dbReference type="HAMAP" id="MF_01527_B">
    <property type="entry name" value="GTP_cyclohydrol_B"/>
    <property type="match status" value="1"/>
</dbReference>
<dbReference type="InterPro" id="IPR022838">
    <property type="entry name" value="GTP_cyclohydrolase_FolE2"/>
</dbReference>
<dbReference type="InterPro" id="IPR003801">
    <property type="entry name" value="GTP_cyclohydrolase_FolE2/MptA"/>
</dbReference>
<dbReference type="NCBIfam" id="NF010200">
    <property type="entry name" value="PRK13674.1-1"/>
    <property type="match status" value="1"/>
</dbReference>
<dbReference type="PANTHER" id="PTHR36445">
    <property type="entry name" value="GTP CYCLOHYDROLASE MPTA"/>
    <property type="match status" value="1"/>
</dbReference>
<dbReference type="PANTHER" id="PTHR36445:SF1">
    <property type="entry name" value="GTP CYCLOHYDROLASE MPTA"/>
    <property type="match status" value="1"/>
</dbReference>
<dbReference type="Pfam" id="PF02649">
    <property type="entry name" value="GCHY-1"/>
    <property type="match status" value="1"/>
</dbReference>
<comment type="function">
    <text evidence="1">Converts GTP to 7,8-dihydroneopterin triphosphate.</text>
</comment>
<comment type="catalytic activity">
    <reaction evidence="1">
        <text>GTP + H2O = 7,8-dihydroneopterin 3'-triphosphate + formate + H(+)</text>
        <dbReference type="Rhea" id="RHEA:17473"/>
        <dbReference type="ChEBI" id="CHEBI:15377"/>
        <dbReference type="ChEBI" id="CHEBI:15378"/>
        <dbReference type="ChEBI" id="CHEBI:15740"/>
        <dbReference type="ChEBI" id="CHEBI:37565"/>
        <dbReference type="ChEBI" id="CHEBI:58462"/>
        <dbReference type="EC" id="3.5.4.16"/>
    </reaction>
</comment>
<comment type="pathway">
    <text evidence="1">Cofactor biosynthesis; 7,8-dihydroneopterin triphosphate biosynthesis; 7,8-dihydroneopterin triphosphate from GTP: step 1/1.</text>
</comment>
<comment type="similarity">
    <text evidence="1">Belongs to the GTP cyclohydrolase IV family.</text>
</comment>
<feature type="chain" id="PRO_1000215387" description="GTP cyclohydrolase FolE2">
    <location>
        <begin position="1"/>
        <end position="256"/>
    </location>
</feature>
<feature type="site" description="May be catalytically important" evidence="1">
    <location>
        <position position="145"/>
    </location>
</feature>
<gene>
    <name evidence="1" type="primary">folE2</name>
    <name type="ordered locus">Desal_2991</name>
</gene>
<name>GCH4_MARSD</name>
<organism>
    <name type="scientific">Maridesulfovibrio salexigens (strain ATCC 14822 / DSM 2638 / NCIMB 8403 / VKM B-1763)</name>
    <name type="common">Desulfovibrio salexigens</name>
    <dbReference type="NCBI Taxonomy" id="526222"/>
    <lineage>
        <taxon>Bacteria</taxon>
        <taxon>Pseudomonadati</taxon>
        <taxon>Thermodesulfobacteriota</taxon>
        <taxon>Desulfovibrionia</taxon>
        <taxon>Desulfovibrionales</taxon>
        <taxon>Desulfovibrionaceae</taxon>
        <taxon>Maridesulfovibrio</taxon>
    </lineage>
</organism>